<organism>
    <name type="scientific">Rattus norvegicus</name>
    <name type="common">Rat</name>
    <dbReference type="NCBI Taxonomy" id="10116"/>
    <lineage>
        <taxon>Eukaryota</taxon>
        <taxon>Metazoa</taxon>
        <taxon>Chordata</taxon>
        <taxon>Craniata</taxon>
        <taxon>Vertebrata</taxon>
        <taxon>Euteleostomi</taxon>
        <taxon>Mammalia</taxon>
        <taxon>Eutheria</taxon>
        <taxon>Euarchontoglires</taxon>
        <taxon>Glires</taxon>
        <taxon>Rodentia</taxon>
        <taxon>Myomorpha</taxon>
        <taxon>Muroidea</taxon>
        <taxon>Muridae</taxon>
        <taxon>Murinae</taxon>
        <taxon>Rattus</taxon>
    </lineage>
</organism>
<protein>
    <recommendedName>
        <fullName evidence="6">Heterogeneous nuclear ribonucleoprotein C</fullName>
        <shortName>hnRNP C</shortName>
    </recommendedName>
    <alternativeName>
        <fullName>hnRNP core protein C</fullName>
    </alternativeName>
</protein>
<sequence>MASNVTNKTDPRSMNSRVFIGNLNTLVVKKSDVEAIFSKYGKIVGCSVHKGFAFVQYVNERNARAAVAGEDGRMIAGQVLDINLAAEPKVNRGKAGVKRSAAEMYGSSFDLDYDFQRDYYDRMYSYPARVPPPPPIARAVVPSKRQRVSGNTSRRGKSGFNSKSGQRGSSSKSVKGDDLQAIKKELTQIKQKVDSLLESLEKIEKEQSKQADLSFSSPVEMKNEKSEEEQSSASVKKDETNVKMESEAGADDSAEEGDLLDDDDNEDRGDDQLELKDDEKEPEEGEDDRDSANGEDDS</sequence>
<proteinExistence type="evidence at protein level"/>
<feature type="initiator methionine" description="Removed" evidence="1">
    <location>
        <position position="1"/>
    </location>
</feature>
<feature type="chain" id="PRO_0000432125" description="Heterogeneous nuclear ribonucleoprotein C">
    <location>
        <begin position="2"/>
        <end position="298"/>
    </location>
</feature>
<feature type="domain" description="RRM" evidence="4">
    <location>
        <begin position="16"/>
        <end position="87"/>
    </location>
</feature>
<feature type="region of interest" description="Disordered" evidence="5">
    <location>
        <begin position="131"/>
        <end position="177"/>
    </location>
</feature>
<feature type="region of interest" description="Disordered" evidence="5">
    <location>
        <begin position="204"/>
        <end position="298"/>
    </location>
</feature>
<feature type="coiled-coil region" evidence="3">
    <location>
        <begin position="176"/>
        <end position="211"/>
    </location>
</feature>
<feature type="short sequence motif" description="Nuclear localization signal" evidence="3">
    <location>
        <begin position="142"/>
        <end position="148"/>
    </location>
</feature>
<feature type="compositionally biased region" description="Low complexity" evidence="5">
    <location>
        <begin position="162"/>
        <end position="173"/>
    </location>
</feature>
<feature type="compositionally biased region" description="Basic and acidic residues" evidence="5">
    <location>
        <begin position="235"/>
        <end position="246"/>
    </location>
</feature>
<feature type="compositionally biased region" description="Acidic residues" evidence="5">
    <location>
        <begin position="248"/>
        <end position="269"/>
    </location>
</feature>
<feature type="compositionally biased region" description="Basic and acidic residues" evidence="5">
    <location>
        <begin position="270"/>
        <end position="279"/>
    </location>
</feature>
<feature type="compositionally biased region" description="Acidic residues" evidence="5">
    <location>
        <begin position="280"/>
        <end position="298"/>
    </location>
</feature>
<feature type="modified residue" description="N-acetylalanine" evidence="1">
    <location>
        <position position="2"/>
    </location>
</feature>
<feature type="modified residue" description="Phosphoserine" evidence="2">
    <location>
        <position position="108"/>
    </location>
</feature>
<feature type="modified residue" description="Phosphoserine" evidence="1">
    <location>
        <position position="149"/>
    </location>
</feature>
<feature type="modified residue" description="Phosphoserine" evidence="1">
    <location>
        <position position="153"/>
    </location>
</feature>
<feature type="modified residue" description="N6-acetyllysine; alternate" evidence="2">
    <location>
        <position position="163"/>
    </location>
</feature>
<feature type="modified residue" description="Phosphoserine" evidence="9">
    <location>
        <position position="214"/>
    </location>
</feature>
<feature type="modified residue" description="Phosphoserine" evidence="2">
    <location>
        <position position="216"/>
    </location>
</feature>
<feature type="modified residue" description="Phosphoserine" evidence="9">
    <location>
        <position position="217"/>
    </location>
</feature>
<feature type="modified residue" description="Phosphoserine" evidence="9">
    <location>
        <position position="226"/>
    </location>
</feature>
<feature type="modified residue" description="Phosphoserine" evidence="9">
    <location>
        <position position="231"/>
    </location>
</feature>
<feature type="modified residue" description="Phosphoserine" evidence="1">
    <location>
        <position position="232"/>
    </location>
</feature>
<feature type="modified residue" description="Phosphoserine" evidence="8">
    <location>
        <position position="234"/>
    </location>
</feature>
<feature type="modified residue" description="Phosphoserine" evidence="9">
    <location>
        <position position="246"/>
    </location>
</feature>
<feature type="modified residue" description="Phosphoserine" evidence="9">
    <location>
        <position position="253"/>
    </location>
</feature>
<feature type="modified residue" description="Phosphoserine" evidence="9">
    <location>
        <position position="291"/>
    </location>
</feature>
<feature type="modified residue" description="Phosphoserine" evidence="1">
    <location>
        <position position="298"/>
    </location>
</feature>
<feature type="cross-link" description="Glycyl lysine isopeptide (Lys-Gly) (interchain with G-Cter in SUMO2)" evidence="1">
    <location>
        <position position="8"/>
    </location>
</feature>
<feature type="cross-link" description="Glycyl lysine isopeptide (Lys-Gly) (interchain with G-Cter in SUMO2)" evidence="1">
    <location>
        <position position="50"/>
    </location>
</feature>
<feature type="cross-link" description="Glycyl lysine isopeptide (Lys-Gly) (interchain with G-Cter in SUMO2)" evidence="1">
    <location>
        <position position="89"/>
    </location>
</feature>
<feature type="cross-link" description="Glycyl lysine isopeptide (Lys-Gly) (interchain with G-Cter in SUMO2)" evidence="1">
    <location>
        <position position="94"/>
    </location>
</feature>
<feature type="cross-link" description="Glycyl lysine isopeptide (Lys-Gly) (interchain with G-Cter in SUMO2); alternate" evidence="1">
    <location>
        <position position="163"/>
    </location>
</feature>
<feature type="cross-link" description="Glycyl lysine isopeptide (Lys-Gly) (interchain with G-Cter in SUMO2)" evidence="1">
    <location>
        <position position="209"/>
    </location>
</feature>
<feature type="cross-link" description="Glycyl lysine isopeptide (Lys-Gly) (interchain with G-Cter in SUMO2)" evidence="1">
    <location>
        <position position="222"/>
    </location>
</feature>
<feature type="cross-link" description="Glycyl lysine isopeptide (Lys-Gly) (interchain with G-Cter in SUMO1); alternate" evidence="1">
    <location>
        <position position="225"/>
    </location>
</feature>
<feature type="cross-link" description="Glycyl lysine isopeptide (Lys-Gly) (interchain with G-Cter in SUMO2); alternate" evidence="1">
    <location>
        <position position="225"/>
    </location>
</feature>
<feature type="cross-link" description="Glycyl lysine isopeptide (Lys-Gly) (interchain with G-Cter in SUMO2)" evidence="1">
    <location>
        <position position="236"/>
    </location>
</feature>
<feature type="cross-link" description="Glycyl lysine isopeptide (Lys-Gly) (interchain with G-Cter in SUMO2)" evidence="1">
    <location>
        <position position="237"/>
    </location>
</feature>
<feature type="cross-link" description="Glycyl lysine isopeptide (Lys-Gly) (interchain with G-Cter in SUMO); alternate" evidence="1">
    <location>
        <position position="243"/>
    </location>
</feature>
<feature type="cross-link" description="Glycyl lysine isopeptide (Lys-Gly) (interchain with G-Cter in SUMO2); alternate" evidence="1">
    <location>
        <position position="243"/>
    </location>
</feature>
<accession>G3V9R8</accession>
<accession>D4ACR0</accession>
<accession>Q4V8K6</accession>
<dbReference type="EMBL" id="AABR06080380">
    <property type="status" value="NOT_ANNOTATED_CDS"/>
    <property type="molecule type" value="Genomic_DNA"/>
</dbReference>
<dbReference type="EMBL" id="AABR06080381">
    <property type="status" value="NOT_ANNOTATED_CDS"/>
    <property type="molecule type" value="Genomic_DNA"/>
</dbReference>
<dbReference type="EMBL" id="AABR06080382">
    <property type="status" value="NOT_ANNOTATED_CDS"/>
    <property type="molecule type" value="Genomic_DNA"/>
</dbReference>
<dbReference type="EMBL" id="AABR06080383">
    <property type="status" value="NOT_ANNOTATED_CDS"/>
    <property type="molecule type" value="Genomic_DNA"/>
</dbReference>
<dbReference type="EMBL" id="AABR06080384">
    <property type="status" value="NOT_ANNOTATED_CDS"/>
    <property type="molecule type" value="Genomic_DNA"/>
</dbReference>
<dbReference type="EMBL" id="AABR06082837">
    <property type="status" value="NOT_ANNOTATED_CDS"/>
    <property type="molecule type" value="Genomic_DNA"/>
</dbReference>
<dbReference type="EMBL" id="AABR06082838">
    <property type="status" value="NOT_ANNOTATED_CDS"/>
    <property type="molecule type" value="Genomic_DNA"/>
</dbReference>
<dbReference type="EMBL" id="AABR06082839">
    <property type="status" value="NOT_ANNOTATED_CDS"/>
    <property type="molecule type" value="Genomic_DNA"/>
</dbReference>
<dbReference type="EMBL" id="BC097346">
    <property type="protein sequence ID" value="AAH97346.1"/>
    <property type="molecule type" value="mRNA"/>
</dbReference>
<dbReference type="BMRB" id="G3V9R8"/>
<dbReference type="SMR" id="G3V9R8"/>
<dbReference type="FunCoup" id="G3V9R8">
    <property type="interactions" value="1104"/>
</dbReference>
<dbReference type="IntAct" id="G3V9R8">
    <property type="interactions" value="3"/>
</dbReference>
<dbReference type="MINT" id="G3V9R8"/>
<dbReference type="STRING" id="10116.ENSRNOP00000057257"/>
<dbReference type="GlyGen" id="G3V9R8">
    <property type="glycosylation" value="1 site, 1 O-linked glycan (1 site)"/>
</dbReference>
<dbReference type="iPTMnet" id="G3V9R8"/>
<dbReference type="PhosphoSitePlus" id="G3V9R8"/>
<dbReference type="jPOST" id="G3V9R8"/>
<dbReference type="PaxDb" id="10116-ENSRNOP00000057256"/>
<dbReference type="PeptideAtlas" id="G3V9R8"/>
<dbReference type="AGR" id="RGD:1309982"/>
<dbReference type="RGD" id="1309982">
    <property type="gene designation" value="Hnrnpc"/>
</dbReference>
<dbReference type="eggNOG" id="KOG0118">
    <property type="taxonomic scope" value="Eukaryota"/>
</dbReference>
<dbReference type="HOGENOM" id="CLU_079090_0_0_1"/>
<dbReference type="InParanoid" id="G3V9R8"/>
<dbReference type="PhylomeDB" id="G3V9R8"/>
<dbReference type="TreeFam" id="TF330974"/>
<dbReference type="Reactome" id="R-RNO-4570464">
    <property type="pathway name" value="SUMOylation of RNA binding proteins"/>
</dbReference>
<dbReference type="Reactome" id="R-RNO-72163">
    <property type="pathway name" value="mRNA Splicing - Major Pathway"/>
</dbReference>
<dbReference type="Reactome" id="R-RNO-72203">
    <property type="pathway name" value="Processing of Capped Intron-Containing Pre-mRNA"/>
</dbReference>
<dbReference type="Reactome" id="R-RNO-9013418">
    <property type="pathway name" value="RHOBTB2 GTPase cycle"/>
</dbReference>
<dbReference type="Reactome" id="R-RNO-9013422">
    <property type="pathway name" value="RHOBTB1 GTPase cycle"/>
</dbReference>
<dbReference type="PRO" id="PR:G3V9R8"/>
<dbReference type="Proteomes" id="UP000002494">
    <property type="component" value="Unplaced"/>
</dbReference>
<dbReference type="GO" id="GO:0015629">
    <property type="term" value="C:actin cytoskeleton"/>
    <property type="evidence" value="ECO:0000266"/>
    <property type="project" value="RGD"/>
</dbReference>
<dbReference type="GO" id="GO:0071013">
    <property type="term" value="C:catalytic step 2 spliceosome"/>
    <property type="evidence" value="ECO:0000266"/>
    <property type="project" value="RGD"/>
</dbReference>
<dbReference type="GO" id="GO:0005829">
    <property type="term" value="C:cytosol"/>
    <property type="evidence" value="ECO:0000266"/>
    <property type="project" value="RGD"/>
</dbReference>
<dbReference type="GO" id="GO:1990826">
    <property type="term" value="C:nucleoplasmic periphery of the nuclear pore complex"/>
    <property type="evidence" value="ECO:0000314"/>
    <property type="project" value="RGD"/>
</dbReference>
<dbReference type="GO" id="GO:0005634">
    <property type="term" value="C:nucleus"/>
    <property type="evidence" value="ECO:0000266"/>
    <property type="project" value="RGD"/>
</dbReference>
<dbReference type="GO" id="GO:0045120">
    <property type="term" value="C:pronucleus"/>
    <property type="evidence" value="ECO:0000266"/>
    <property type="project" value="RGD"/>
</dbReference>
<dbReference type="GO" id="GO:0032991">
    <property type="term" value="C:protein-containing complex"/>
    <property type="evidence" value="ECO:0000266"/>
    <property type="project" value="RGD"/>
</dbReference>
<dbReference type="GO" id="GO:0005681">
    <property type="term" value="C:spliceosomal complex"/>
    <property type="evidence" value="ECO:0000250"/>
    <property type="project" value="HGNC-UCL"/>
</dbReference>
<dbReference type="GO" id="GO:0005697">
    <property type="term" value="C:telomerase holoenzyme complex"/>
    <property type="evidence" value="ECO:0000266"/>
    <property type="project" value="RGD"/>
</dbReference>
<dbReference type="GO" id="GO:1990827">
    <property type="term" value="F:deaminase binding"/>
    <property type="evidence" value="ECO:0000353"/>
    <property type="project" value="RGD"/>
</dbReference>
<dbReference type="GO" id="GO:0004857">
    <property type="term" value="F:enzyme inhibitor activity"/>
    <property type="evidence" value="ECO:0000314"/>
    <property type="project" value="RGD"/>
</dbReference>
<dbReference type="GO" id="GO:0042802">
    <property type="term" value="F:identical protein binding"/>
    <property type="evidence" value="ECO:0000266"/>
    <property type="project" value="RGD"/>
</dbReference>
<dbReference type="GO" id="GO:0003730">
    <property type="term" value="F:mRNA 3'-UTR binding"/>
    <property type="evidence" value="ECO:0000266"/>
    <property type="project" value="RGD"/>
</dbReference>
<dbReference type="GO" id="GO:0003729">
    <property type="term" value="F:mRNA binding"/>
    <property type="evidence" value="ECO:0000314"/>
    <property type="project" value="RGD"/>
</dbReference>
<dbReference type="GO" id="GO:1990247">
    <property type="term" value="F:N6-methyladenosine-containing RNA reader activity"/>
    <property type="evidence" value="ECO:0000250"/>
    <property type="project" value="UniProtKB"/>
</dbReference>
<dbReference type="GO" id="GO:0008266">
    <property type="term" value="F:poly(U) RNA binding"/>
    <property type="evidence" value="ECO:0000266"/>
    <property type="project" value="RGD"/>
</dbReference>
<dbReference type="GO" id="GO:0019904">
    <property type="term" value="F:protein domain specific binding"/>
    <property type="evidence" value="ECO:0000353"/>
    <property type="project" value="RGD"/>
</dbReference>
<dbReference type="GO" id="GO:0043021">
    <property type="term" value="F:ribonucleoprotein complex binding"/>
    <property type="evidence" value="ECO:0000353"/>
    <property type="project" value="RGD"/>
</dbReference>
<dbReference type="GO" id="GO:0003723">
    <property type="term" value="F:RNA binding"/>
    <property type="evidence" value="ECO:0000266"/>
    <property type="project" value="RGD"/>
</dbReference>
<dbReference type="GO" id="GO:0070034">
    <property type="term" value="F:telomerase RNA binding"/>
    <property type="evidence" value="ECO:0000266"/>
    <property type="project" value="RGD"/>
</dbReference>
<dbReference type="GO" id="GO:0070935">
    <property type="term" value="P:3'-UTR-mediated mRNA stabilization"/>
    <property type="evidence" value="ECO:0000266"/>
    <property type="project" value="RGD"/>
</dbReference>
<dbReference type="GO" id="GO:0000398">
    <property type="term" value="P:mRNA splicing, via spliceosome"/>
    <property type="evidence" value="ECO:0000250"/>
    <property type="project" value="UniProtKB"/>
</dbReference>
<dbReference type="GO" id="GO:0090367">
    <property type="term" value="P:negative regulation of mRNA modification"/>
    <property type="evidence" value="ECO:0000314"/>
    <property type="project" value="RGD"/>
</dbReference>
<dbReference type="GO" id="GO:0032211">
    <property type="term" value="P:negative regulation of telomere maintenance via telomerase"/>
    <property type="evidence" value="ECO:0000266"/>
    <property type="project" value="RGD"/>
</dbReference>
<dbReference type="CDD" id="cd12603">
    <property type="entry name" value="RRM_hnRNPC"/>
    <property type="match status" value="1"/>
</dbReference>
<dbReference type="FunFam" id="3.30.70.330:FF:000019">
    <property type="entry name" value="heterogeneous nuclear ribonucleoproteins C1/C2 isoform X1"/>
    <property type="match status" value="1"/>
</dbReference>
<dbReference type="Gene3D" id="3.30.70.330">
    <property type="match status" value="1"/>
</dbReference>
<dbReference type="InterPro" id="IPR017347">
    <property type="entry name" value="hnRNP_C"/>
</dbReference>
<dbReference type="InterPro" id="IPR012677">
    <property type="entry name" value="Nucleotide-bd_a/b_plait_sf"/>
</dbReference>
<dbReference type="InterPro" id="IPR035979">
    <property type="entry name" value="RBD_domain_sf"/>
</dbReference>
<dbReference type="InterPro" id="IPR000504">
    <property type="entry name" value="RRM_dom"/>
</dbReference>
<dbReference type="InterPro" id="IPR051186">
    <property type="entry name" value="RRM_HNRPC/RALY_subfam"/>
</dbReference>
<dbReference type="PANTHER" id="PTHR13968">
    <property type="entry name" value="HETEROGENEOUS NUCLEAR RIBONUCLEOPROTEIN"/>
    <property type="match status" value="1"/>
</dbReference>
<dbReference type="PANTHER" id="PTHR13968:SF3">
    <property type="entry name" value="HETEROGENEOUS NUCLEAR RIBONUCLEOPROTEINS C1_C2"/>
    <property type="match status" value="1"/>
</dbReference>
<dbReference type="Pfam" id="PF00076">
    <property type="entry name" value="RRM_1"/>
    <property type="match status" value="1"/>
</dbReference>
<dbReference type="PIRSF" id="PIRSF037992">
    <property type="entry name" value="hnRNP-C_Raly"/>
    <property type="match status" value="1"/>
</dbReference>
<dbReference type="SMART" id="SM00360">
    <property type="entry name" value="RRM"/>
    <property type="match status" value="1"/>
</dbReference>
<dbReference type="SUPFAM" id="SSF54928">
    <property type="entry name" value="RNA-binding domain, RBD"/>
    <property type="match status" value="1"/>
</dbReference>
<dbReference type="PROSITE" id="PS50102">
    <property type="entry name" value="RRM"/>
    <property type="match status" value="1"/>
</dbReference>
<gene>
    <name evidence="7" type="primary">Hnrnpc</name>
    <name type="synonym">Hnrpc</name>
</gene>
<reference key="1">
    <citation type="journal article" date="2004" name="Nature">
        <title>Genome sequence of the Brown Norway rat yields insights into mammalian evolution.</title>
        <authorList>
            <person name="Gibbs R.A."/>
            <person name="Weinstock G.M."/>
            <person name="Metzker M.L."/>
            <person name="Muzny D.M."/>
            <person name="Sodergren E.J."/>
            <person name="Scherer S."/>
            <person name="Scott G."/>
            <person name="Steffen D."/>
            <person name="Worley K.C."/>
            <person name="Burch P.E."/>
            <person name="Okwuonu G."/>
            <person name="Hines S."/>
            <person name="Lewis L."/>
            <person name="Deramo C."/>
            <person name="Delgado O."/>
            <person name="Dugan-Rocha S."/>
            <person name="Miner G."/>
            <person name="Morgan M."/>
            <person name="Hawes A."/>
            <person name="Gill R."/>
            <person name="Holt R.A."/>
            <person name="Adams M.D."/>
            <person name="Amanatides P.G."/>
            <person name="Baden-Tillson H."/>
            <person name="Barnstead M."/>
            <person name="Chin S."/>
            <person name="Evans C.A."/>
            <person name="Ferriera S."/>
            <person name="Fosler C."/>
            <person name="Glodek A."/>
            <person name="Gu Z."/>
            <person name="Jennings D."/>
            <person name="Kraft C.L."/>
            <person name="Nguyen T."/>
            <person name="Pfannkoch C.M."/>
            <person name="Sitter C."/>
            <person name="Sutton G.G."/>
            <person name="Venter J.C."/>
            <person name="Woodage T."/>
            <person name="Smith D."/>
            <person name="Lee H.-M."/>
            <person name="Gustafson E."/>
            <person name="Cahill P."/>
            <person name="Kana A."/>
            <person name="Doucette-Stamm L."/>
            <person name="Weinstock K."/>
            <person name="Fechtel K."/>
            <person name="Weiss R.B."/>
            <person name="Dunn D.M."/>
            <person name="Green E.D."/>
            <person name="Blakesley R.W."/>
            <person name="Bouffard G.G."/>
            <person name="De Jong P.J."/>
            <person name="Osoegawa K."/>
            <person name="Zhu B."/>
            <person name="Marra M."/>
            <person name="Schein J."/>
            <person name="Bosdet I."/>
            <person name="Fjell C."/>
            <person name="Jones S."/>
            <person name="Krzywinski M."/>
            <person name="Mathewson C."/>
            <person name="Siddiqui A."/>
            <person name="Wye N."/>
            <person name="McPherson J."/>
            <person name="Zhao S."/>
            <person name="Fraser C.M."/>
            <person name="Shetty J."/>
            <person name="Shatsman S."/>
            <person name="Geer K."/>
            <person name="Chen Y."/>
            <person name="Abramzon S."/>
            <person name="Nierman W.C."/>
            <person name="Havlak P.H."/>
            <person name="Chen R."/>
            <person name="Durbin K.J."/>
            <person name="Egan A."/>
            <person name="Ren Y."/>
            <person name="Song X.-Z."/>
            <person name="Li B."/>
            <person name="Liu Y."/>
            <person name="Qin X."/>
            <person name="Cawley S."/>
            <person name="Cooney A.J."/>
            <person name="D'Souza L.M."/>
            <person name="Martin K."/>
            <person name="Wu J.Q."/>
            <person name="Gonzalez-Garay M.L."/>
            <person name="Jackson A.R."/>
            <person name="Kalafus K.J."/>
            <person name="McLeod M.P."/>
            <person name="Milosavljevic A."/>
            <person name="Virk D."/>
            <person name="Volkov A."/>
            <person name="Wheeler D.A."/>
            <person name="Zhang Z."/>
            <person name="Bailey J.A."/>
            <person name="Eichler E.E."/>
            <person name="Tuzun E."/>
            <person name="Birney E."/>
            <person name="Mongin E."/>
            <person name="Ureta-Vidal A."/>
            <person name="Woodwark C."/>
            <person name="Zdobnov E."/>
            <person name="Bork P."/>
            <person name="Suyama M."/>
            <person name="Torrents D."/>
            <person name="Alexandersson M."/>
            <person name="Trask B.J."/>
            <person name="Young J.M."/>
            <person name="Huang H."/>
            <person name="Wang H."/>
            <person name="Xing H."/>
            <person name="Daniels S."/>
            <person name="Gietzen D."/>
            <person name="Schmidt J."/>
            <person name="Stevens K."/>
            <person name="Vitt U."/>
            <person name="Wingrove J."/>
            <person name="Camara F."/>
            <person name="Mar Alba M."/>
            <person name="Abril J.F."/>
            <person name="Guigo R."/>
            <person name="Smit A."/>
            <person name="Dubchak I."/>
            <person name="Rubin E.M."/>
            <person name="Couronne O."/>
            <person name="Poliakov A."/>
            <person name="Huebner N."/>
            <person name="Ganten D."/>
            <person name="Goesele C."/>
            <person name="Hummel O."/>
            <person name="Kreitler T."/>
            <person name="Lee Y.-A."/>
            <person name="Monti J."/>
            <person name="Schulz H."/>
            <person name="Zimdahl H."/>
            <person name="Himmelbauer H."/>
            <person name="Lehrach H."/>
            <person name="Jacob H.J."/>
            <person name="Bromberg S."/>
            <person name="Gullings-Handley J."/>
            <person name="Jensen-Seaman M.I."/>
            <person name="Kwitek A.E."/>
            <person name="Lazar J."/>
            <person name="Pasko D."/>
            <person name="Tonellato P.J."/>
            <person name="Twigger S."/>
            <person name="Ponting C.P."/>
            <person name="Duarte J.M."/>
            <person name="Rice S."/>
            <person name="Goodstadt L."/>
            <person name="Beatson S.A."/>
            <person name="Emes R.D."/>
            <person name="Winter E.E."/>
            <person name="Webber C."/>
            <person name="Brandt P."/>
            <person name="Nyakatura G."/>
            <person name="Adetobi M."/>
            <person name="Chiaromonte F."/>
            <person name="Elnitski L."/>
            <person name="Eswara P."/>
            <person name="Hardison R.C."/>
            <person name="Hou M."/>
            <person name="Kolbe D."/>
            <person name="Makova K."/>
            <person name="Miller W."/>
            <person name="Nekrutenko A."/>
            <person name="Riemer C."/>
            <person name="Schwartz S."/>
            <person name="Taylor J."/>
            <person name="Yang S."/>
            <person name="Zhang Y."/>
            <person name="Lindpaintner K."/>
            <person name="Andrews T.D."/>
            <person name="Caccamo M."/>
            <person name="Clamp M."/>
            <person name="Clarke L."/>
            <person name="Curwen V."/>
            <person name="Durbin R.M."/>
            <person name="Eyras E."/>
            <person name="Searle S.M."/>
            <person name="Cooper G.M."/>
            <person name="Batzoglou S."/>
            <person name="Brudno M."/>
            <person name="Sidow A."/>
            <person name="Stone E.A."/>
            <person name="Payseur B.A."/>
            <person name="Bourque G."/>
            <person name="Lopez-Otin C."/>
            <person name="Puente X.S."/>
            <person name="Chakrabarti K."/>
            <person name="Chatterji S."/>
            <person name="Dewey C."/>
            <person name="Pachter L."/>
            <person name="Bray N."/>
            <person name="Yap V.B."/>
            <person name="Caspi A."/>
            <person name="Tesler G."/>
            <person name="Pevzner P.A."/>
            <person name="Haussler D."/>
            <person name="Roskin K.M."/>
            <person name="Baertsch R."/>
            <person name="Clawson H."/>
            <person name="Furey T.S."/>
            <person name="Hinrichs A.S."/>
            <person name="Karolchik D."/>
            <person name="Kent W.J."/>
            <person name="Rosenbloom K.R."/>
            <person name="Trumbower H."/>
            <person name="Weirauch M."/>
            <person name="Cooper D.N."/>
            <person name="Stenson P.D."/>
            <person name="Ma B."/>
            <person name="Brent M."/>
            <person name="Arumugam M."/>
            <person name="Shteynberg D."/>
            <person name="Copley R.R."/>
            <person name="Taylor M.S."/>
            <person name="Riethman H."/>
            <person name="Mudunuri U."/>
            <person name="Peterson J."/>
            <person name="Guyer M."/>
            <person name="Felsenfeld A."/>
            <person name="Old S."/>
            <person name="Mockrin S."/>
            <person name="Collins F.S."/>
        </authorList>
    </citation>
    <scope>NUCLEOTIDE SEQUENCE [LARGE SCALE GENOMIC DNA]</scope>
    <source>
        <strain>Brown Norway</strain>
    </source>
</reference>
<reference key="2">
    <citation type="journal article" date="2004" name="Genome Res.">
        <title>The status, quality, and expansion of the NIH full-length cDNA project: the Mammalian Gene Collection (MGC).</title>
        <authorList>
            <consortium name="The MGC Project Team"/>
        </authorList>
    </citation>
    <scope>NUCLEOTIDE SEQUENCE [LARGE SCALE MRNA]</scope>
    <source>
        <tissue>Placenta</tissue>
    </source>
</reference>
<reference key="3">
    <citation type="journal article" date="2006" name="Proc. Natl. Acad. Sci. U.S.A.">
        <title>Quantitative phosphoproteomics of vasopressin-sensitive renal cells: regulation of aquaporin-2 phosphorylation at two sites.</title>
        <authorList>
            <person name="Hoffert J.D."/>
            <person name="Pisitkun T."/>
            <person name="Wang G."/>
            <person name="Shen R.-F."/>
            <person name="Knepper M.A."/>
        </authorList>
    </citation>
    <scope>PHOSPHORYLATION [LARGE SCALE ANALYSIS] AT SER-234</scope>
    <scope>IDENTIFICATION BY MASS SPECTROMETRY [LARGE SCALE ANALYSIS]</scope>
</reference>
<reference key="4">
    <citation type="journal article" date="2012" name="Nat. Commun.">
        <title>Quantitative maps of protein phosphorylation sites across 14 different rat organs and tissues.</title>
        <authorList>
            <person name="Lundby A."/>
            <person name="Secher A."/>
            <person name="Lage K."/>
            <person name="Nordsborg N.B."/>
            <person name="Dmytriyev A."/>
            <person name="Lundby C."/>
            <person name="Olsen J.V."/>
        </authorList>
    </citation>
    <scope>PHOSPHORYLATION [LARGE SCALE ANALYSIS] AT SER-214; SER-217; SER-226; SER-231; SER-246; SER-253 AND SER-291</scope>
    <scope>IDENTIFICATION BY MASS SPECTROMETRY [LARGE SCALE ANALYSIS]</scope>
</reference>
<evidence type="ECO:0000250" key="1">
    <source>
        <dbReference type="UniProtKB" id="P07910"/>
    </source>
</evidence>
<evidence type="ECO:0000250" key="2">
    <source>
        <dbReference type="UniProtKB" id="Q9Z204"/>
    </source>
</evidence>
<evidence type="ECO:0000255" key="3"/>
<evidence type="ECO:0000255" key="4">
    <source>
        <dbReference type="PROSITE-ProRule" id="PRU00176"/>
    </source>
</evidence>
<evidence type="ECO:0000256" key="5">
    <source>
        <dbReference type="SAM" id="MobiDB-lite"/>
    </source>
</evidence>
<evidence type="ECO:0000305" key="6"/>
<evidence type="ECO:0000312" key="7">
    <source>
        <dbReference type="RGD" id="1309982"/>
    </source>
</evidence>
<evidence type="ECO:0007744" key="8">
    <source>
    </source>
</evidence>
<evidence type="ECO:0007744" key="9">
    <source>
    </source>
</evidence>
<name>HNRPC_RAT</name>
<keyword id="KW-0007">Acetylation</keyword>
<keyword id="KW-0175">Coiled coil</keyword>
<keyword id="KW-1017">Isopeptide bond</keyword>
<keyword id="KW-0507">mRNA processing</keyword>
<keyword id="KW-0508">mRNA splicing</keyword>
<keyword id="KW-0539">Nucleus</keyword>
<keyword id="KW-0597">Phosphoprotein</keyword>
<keyword id="KW-1185">Reference proteome</keyword>
<keyword id="KW-0687">Ribonucleoprotein</keyword>
<keyword id="KW-0694">RNA-binding</keyword>
<keyword id="KW-0747">Spliceosome</keyword>
<keyword id="KW-0832">Ubl conjugation</keyword>
<comment type="function">
    <text evidence="1">Binds pre-mRNA and nucleates the assembly of 40S hnRNP particles. Interacts with poly-U tracts in the 3'-UTR or 5'-UTR of mRNA and modulates the stability and the level of translation of bound mRNA molecules. Single HNRNPC tetramers bind 230-240 nucleotides. Trimers of HNRNPC tetramers bind 700 nucleotides. May play a role in the early steps of spliceosome assembly and pre-mRNA splicing. N6-methyladenosine (m6A) has been shown to alter the local structure in mRNAs and long non-coding RNAs (lncRNAs) via a mechanism named 'm(6)A-switch', facilitating binding of HNRNPC, leading to regulation of mRNA splicing.</text>
</comment>
<comment type="subunit">
    <text evidence="1">Tetramer composed of 3 copies of isoform C1 and 1 copy of isoform C2. Assembly of 3 tetramers with bound pre-mRNA gives rise to a 19S complex that interacts with HNRNPA2B1 tetramers. Component of the 40S hnRNP particle. Identified in the spliceosome C complex. Interacts with IGF2BP1 (By similarity). Interacts with PPIA/CYPA (By similarity).</text>
</comment>
<comment type="subcellular location">
    <subcellularLocation>
        <location evidence="1">Nucleus</location>
    </subcellularLocation>
    <text evidence="1">Component of ribonucleosomes.</text>
</comment>
<comment type="PTM">
    <text evidence="1">Phosphorylated on Ser-253 and Ser-291 in resting cells.</text>
</comment>
<comment type="PTM">
    <text evidence="1">Sumoylated. Sumoylation reduces affinity for mRNA.</text>
</comment>
<comment type="PTM">
    <text evidence="1">Ubiquitinated and degraded after nucleo-cytoplasmic transport by YWHAE.</text>
</comment>
<comment type="similarity">
    <text evidence="6">Belongs to the RRM HNRPC family. RALY subfamily.</text>
</comment>